<reference key="1">
    <citation type="journal article" date="2003" name="Nature">
        <title>The genome of a motile marine Synechococcus.</title>
        <authorList>
            <person name="Palenik B."/>
            <person name="Brahamsha B."/>
            <person name="Larimer F.W."/>
            <person name="Land M.L."/>
            <person name="Hauser L."/>
            <person name="Chain P."/>
            <person name="Lamerdin J.E."/>
            <person name="Regala W."/>
            <person name="Allen E.E."/>
            <person name="McCarren J."/>
            <person name="Paulsen I.T."/>
            <person name="Dufresne A."/>
            <person name="Partensky F."/>
            <person name="Webb E.A."/>
            <person name="Waterbury J."/>
        </authorList>
    </citation>
    <scope>NUCLEOTIDE SEQUENCE [LARGE SCALE GENOMIC DNA]</scope>
    <source>
        <strain>WH8102</strain>
    </source>
</reference>
<gene>
    <name evidence="1" type="primary">lepA</name>
    <name type="ordered locus">SYNW1684</name>
</gene>
<name>LEPA_PARMW</name>
<feature type="chain" id="PRO_0000176360" description="Elongation factor 4">
    <location>
        <begin position="1"/>
        <end position="606"/>
    </location>
</feature>
<feature type="domain" description="tr-type G">
    <location>
        <begin position="7"/>
        <end position="189"/>
    </location>
</feature>
<feature type="binding site" evidence="1">
    <location>
        <begin position="19"/>
        <end position="24"/>
    </location>
    <ligand>
        <name>GTP</name>
        <dbReference type="ChEBI" id="CHEBI:37565"/>
    </ligand>
</feature>
<feature type="binding site" evidence="1">
    <location>
        <begin position="136"/>
        <end position="139"/>
    </location>
    <ligand>
        <name>GTP</name>
        <dbReference type="ChEBI" id="CHEBI:37565"/>
    </ligand>
</feature>
<evidence type="ECO:0000255" key="1">
    <source>
        <dbReference type="HAMAP-Rule" id="MF_00071"/>
    </source>
</evidence>
<protein>
    <recommendedName>
        <fullName evidence="1">Elongation factor 4</fullName>
        <shortName evidence="1">EF-4</shortName>
        <ecNumber evidence="1">3.6.5.n1</ecNumber>
    </recommendedName>
    <alternativeName>
        <fullName evidence="1">Ribosomal back-translocase LepA</fullName>
    </alternativeName>
</protein>
<comment type="function">
    <text evidence="1">Required for accurate and efficient protein synthesis under certain stress conditions. May act as a fidelity factor of the translation reaction, by catalyzing a one-codon backward translocation of tRNAs on improperly translocated ribosomes. Back-translocation proceeds from a post-translocation (POST) complex to a pre-translocation (PRE) complex, thus giving elongation factor G a second chance to translocate the tRNAs correctly. Binds to ribosomes in a GTP-dependent manner.</text>
</comment>
<comment type="catalytic activity">
    <reaction evidence="1">
        <text>GTP + H2O = GDP + phosphate + H(+)</text>
        <dbReference type="Rhea" id="RHEA:19669"/>
        <dbReference type="ChEBI" id="CHEBI:15377"/>
        <dbReference type="ChEBI" id="CHEBI:15378"/>
        <dbReference type="ChEBI" id="CHEBI:37565"/>
        <dbReference type="ChEBI" id="CHEBI:43474"/>
        <dbReference type="ChEBI" id="CHEBI:58189"/>
        <dbReference type="EC" id="3.6.5.n1"/>
    </reaction>
</comment>
<comment type="subcellular location">
    <subcellularLocation>
        <location evidence="1">Cell inner membrane</location>
        <topology evidence="1">Peripheral membrane protein</topology>
        <orientation evidence="1">Cytoplasmic side</orientation>
    </subcellularLocation>
</comment>
<comment type="similarity">
    <text evidence="1">Belongs to the TRAFAC class translation factor GTPase superfamily. Classic translation factor GTPase family. LepA subfamily.</text>
</comment>
<accession>Q7U5L9</accession>
<dbReference type="EC" id="3.6.5.n1" evidence="1"/>
<dbReference type="EMBL" id="BX569693">
    <property type="protein sequence ID" value="CAE08199.1"/>
    <property type="molecule type" value="Genomic_DNA"/>
</dbReference>
<dbReference type="RefSeq" id="WP_011128546.1">
    <property type="nucleotide sequence ID" value="NC_005070.1"/>
</dbReference>
<dbReference type="SMR" id="Q7U5L9"/>
<dbReference type="STRING" id="84588.SYNW1684"/>
<dbReference type="KEGG" id="syw:SYNW1684"/>
<dbReference type="eggNOG" id="COG0481">
    <property type="taxonomic scope" value="Bacteria"/>
</dbReference>
<dbReference type="HOGENOM" id="CLU_009995_3_3_3"/>
<dbReference type="Proteomes" id="UP000001422">
    <property type="component" value="Chromosome"/>
</dbReference>
<dbReference type="GO" id="GO:0005886">
    <property type="term" value="C:plasma membrane"/>
    <property type="evidence" value="ECO:0007669"/>
    <property type="project" value="UniProtKB-SubCell"/>
</dbReference>
<dbReference type="GO" id="GO:0005525">
    <property type="term" value="F:GTP binding"/>
    <property type="evidence" value="ECO:0007669"/>
    <property type="project" value="UniProtKB-KW"/>
</dbReference>
<dbReference type="GO" id="GO:0003924">
    <property type="term" value="F:GTPase activity"/>
    <property type="evidence" value="ECO:0007669"/>
    <property type="project" value="InterPro"/>
</dbReference>
<dbReference type="GO" id="GO:0043022">
    <property type="term" value="F:ribosome binding"/>
    <property type="evidence" value="ECO:0007669"/>
    <property type="project" value="TreeGrafter"/>
</dbReference>
<dbReference type="GO" id="GO:0045727">
    <property type="term" value="P:positive regulation of translation"/>
    <property type="evidence" value="ECO:0007669"/>
    <property type="project" value="TreeGrafter"/>
</dbReference>
<dbReference type="GO" id="GO:0006412">
    <property type="term" value="P:translation"/>
    <property type="evidence" value="ECO:0007669"/>
    <property type="project" value="UniProtKB-KW"/>
</dbReference>
<dbReference type="CDD" id="cd03699">
    <property type="entry name" value="EF4_II"/>
    <property type="match status" value="1"/>
</dbReference>
<dbReference type="CDD" id="cd16260">
    <property type="entry name" value="EF4_III"/>
    <property type="match status" value="1"/>
</dbReference>
<dbReference type="CDD" id="cd01890">
    <property type="entry name" value="LepA"/>
    <property type="match status" value="1"/>
</dbReference>
<dbReference type="CDD" id="cd03709">
    <property type="entry name" value="lepA_C"/>
    <property type="match status" value="1"/>
</dbReference>
<dbReference type="FunFam" id="3.40.50.300:FF:000078">
    <property type="entry name" value="Elongation factor 4"/>
    <property type="match status" value="1"/>
</dbReference>
<dbReference type="FunFam" id="2.40.30.10:FF:000015">
    <property type="entry name" value="Translation factor GUF1, mitochondrial"/>
    <property type="match status" value="1"/>
</dbReference>
<dbReference type="FunFam" id="3.30.70.240:FF:000007">
    <property type="entry name" value="Translation factor GUF1, mitochondrial"/>
    <property type="match status" value="1"/>
</dbReference>
<dbReference type="FunFam" id="3.30.70.2570:FF:000001">
    <property type="entry name" value="Translation factor GUF1, mitochondrial"/>
    <property type="match status" value="1"/>
</dbReference>
<dbReference type="FunFam" id="3.30.70.870:FF:000004">
    <property type="entry name" value="Translation factor GUF1, mitochondrial"/>
    <property type="match status" value="1"/>
</dbReference>
<dbReference type="Gene3D" id="3.30.70.240">
    <property type="match status" value="1"/>
</dbReference>
<dbReference type="Gene3D" id="3.30.70.2570">
    <property type="entry name" value="Elongation factor 4, C-terminal domain"/>
    <property type="match status" value="1"/>
</dbReference>
<dbReference type="Gene3D" id="3.30.70.870">
    <property type="entry name" value="Elongation Factor G (Translational Gtpase), domain 3"/>
    <property type="match status" value="1"/>
</dbReference>
<dbReference type="Gene3D" id="3.40.50.300">
    <property type="entry name" value="P-loop containing nucleotide triphosphate hydrolases"/>
    <property type="match status" value="1"/>
</dbReference>
<dbReference type="Gene3D" id="2.40.30.10">
    <property type="entry name" value="Translation factors"/>
    <property type="match status" value="1"/>
</dbReference>
<dbReference type="HAMAP" id="MF_03138">
    <property type="entry name" value="GUFP"/>
    <property type="match status" value="1"/>
</dbReference>
<dbReference type="HAMAP" id="MF_00071">
    <property type="entry name" value="LepA"/>
    <property type="match status" value="1"/>
</dbReference>
<dbReference type="InterPro" id="IPR006297">
    <property type="entry name" value="EF-4"/>
</dbReference>
<dbReference type="InterPro" id="IPR035647">
    <property type="entry name" value="EFG_III/V"/>
</dbReference>
<dbReference type="InterPro" id="IPR000640">
    <property type="entry name" value="EFG_V-like"/>
</dbReference>
<dbReference type="InterPro" id="IPR004161">
    <property type="entry name" value="EFTu-like_2"/>
</dbReference>
<dbReference type="InterPro" id="IPR031157">
    <property type="entry name" value="G_TR_CS"/>
</dbReference>
<dbReference type="InterPro" id="IPR027518">
    <property type="entry name" value="GUFP"/>
</dbReference>
<dbReference type="InterPro" id="IPR038363">
    <property type="entry name" value="LepA_C_sf"/>
</dbReference>
<dbReference type="InterPro" id="IPR013842">
    <property type="entry name" value="LepA_CTD"/>
</dbReference>
<dbReference type="InterPro" id="IPR035654">
    <property type="entry name" value="LepA_IV"/>
</dbReference>
<dbReference type="InterPro" id="IPR027417">
    <property type="entry name" value="P-loop_NTPase"/>
</dbReference>
<dbReference type="InterPro" id="IPR005225">
    <property type="entry name" value="Small_GTP-bd"/>
</dbReference>
<dbReference type="InterPro" id="IPR000795">
    <property type="entry name" value="T_Tr_GTP-bd_dom"/>
</dbReference>
<dbReference type="InterPro" id="IPR009000">
    <property type="entry name" value="Transl_B-barrel_sf"/>
</dbReference>
<dbReference type="NCBIfam" id="TIGR01393">
    <property type="entry name" value="lepA"/>
    <property type="match status" value="1"/>
</dbReference>
<dbReference type="NCBIfam" id="TIGR00231">
    <property type="entry name" value="small_GTP"/>
    <property type="match status" value="1"/>
</dbReference>
<dbReference type="PANTHER" id="PTHR43512:SF4">
    <property type="entry name" value="TRANSLATION FACTOR GUF1 HOMOLOG, CHLOROPLASTIC"/>
    <property type="match status" value="1"/>
</dbReference>
<dbReference type="PANTHER" id="PTHR43512">
    <property type="entry name" value="TRANSLATION FACTOR GUF1-RELATED"/>
    <property type="match status" value="1"/>
</dbReference>
<dbReference type="Pfam" id="PF00679">
    <property type="entry name" value="EFG_C"/>
    <property type="match status" value="1"/>
</dbReference>
<dbReference type="Pfam" id="PF00009">
    <property type="entry name" value="GTP_EFTU"/>
    <property type="match status" value="1"/>
</dbReference>
<dbReference type="Pfam" id="PF03144">
    <property type="entry name" value="GTP_EFTU_D2"/>
    <property type="match status" value="1"/>
</dbReference>
<dbReference type="Pfam" id="PF06421">
    <property type="entry name" value="LepA_C"/>
    <property type="match status" value="1"/>
</dbReference>
<dbReference type="PRINTS" id="PR00315">
    <property type="entry name" value="ELONGATNFCT"/>
</dbReference>
<dbReference type="SMART" id="SM00838">
    <property type="entry name" value="EFG_C"/>
    <property type="match status" value="1"/>
</dbReference>
<dbReference type="SUPFAM" id="SSF54980">
    <property type="entry name" value="EF-G C-terminal domain-like"/>
    <property type="match status" value="2"/>
</dbReference>
<dbReference type="SUPFAM" id="SSF52540">
    <property type="entry name" value="P-loop containing nucleoside triphosphate hydrolases"/>
    <property type="match status" value="1"/>
</dbReference>
<dbReference type="SUPFAM" id="SSF50447">
    <property type="entry name" value="Translation proteins"/>
    <property type="match status" value="1"/>
</dbReference>
<dbReference type="PROSITE" id="PS00301">
    <property type="entry name" value="G_TR_1"/>
    <property type="match status" value="1"/>
</dbReference>
<dbReference type="PROSITE" id="PS51722">
    <property type="entry name" value="G_TR_2"/>
    <property type="match status" value="1"/>
</dbReference>
<organism>
    <name type="scientific">Parasynechococcus marenigrum (strain WH8102)</name>
    <dbReference type="NCBI Taxonomy" id="84588"/>
    <lineage>
        <taxon>Bacteria</taxon>
        <taxon>Bacillati</taxon>
        <taxon>Cyanobacteriota</taxon>
        <taxon>Cyanophyceae</taxon>
        <taxon>Synechococcales</taxon>
        <taxon>Prochlorococcaceae</taxon>
        <taxon>Parasynechococcus</taxon>
        <taxon>Parasynechococcus marenigrum</taxon>
    </lineage>
</organism>
<proteinExistence type="inferred from homology"/>
<sequence length="606" mass="67235">MTDAPVSRIRNFCIIAHIDHGKSTLADRLLQDTGTVANRDMQEQFLDNMDLERERGITIKLQAARMNYTATDGQQYVLNLIDTPGHVDFSYEVSRSLQACEGALLVVDASQGVEAQTLANVYLALDNDLEIIPVLNKIDLPGADPDRIKEEVEAIIGLDCDNAIPCSAKTGLGVPEILQAVVDRVPPPKDALEEPTKALIFDSYYDPYRGVIVYFRVMSGRISCKDKVLLMASKKTYELDEIGIMAPDQKKVDELHAGEVGYLAASIKAVADARVGDTITLLSAPADEALPGYTEAKPMVFCGLFPTEADQYPDLRDALDKLQLSDAALKYEPETSSAMGFGFRCGFLGLLHMEIVQERLEREYDLDLIVTAPSVIYKVNMIDGSEVMVDNPATLPDPQKRESIEEPYVKMEIYAPNEYNGALMGLCQERRGEYIDMKYITTDRVTLIYELPLAEVVTDFFDQMKTRTQGYASMEYSLIGYRKNQLVRLDVLINGERADALTTIVHQDKAYNVGKALVEKLKELIPRQQFKIPIQASIGSRIIASTSISAIRKDVLAKCYGGDISRKKKLLKKQAKGKKRMKAMGKVDVPQEAFMAVLKLNDGGGS</sequence>
<keyword id="KW-0997">Cell inner membrane</keyword>
<keyword id="KW-1003">Cell membrane</keyword>
<keyword id="KW-0342">GTP-binding</keyword>
<keyword id="KW-0378">Hydrolase</keyword>
<keyword id="KW-0472">Membrane</keyword>
<keyword id="KW-0547">Nucleotide-binding</keyword>
<keyword id="KW-0648">Protein biosynthesis</keyword>